<accession>Q4R866</accession>
<name>SC22A_MACFA</name>
<proteinExistence type="evidence at transcript level"/>
<protein>
    <recommendedName>
        <fullName>Vesicle-trafficking protein SEC22a</fullName>
    </recommendedName>
    <alternativeName>
        <fullName>SEC22 vesicle-trafficking protein homolog A</fullName>
    </alternativeName>
</protein>
<sequence>MSMILSASVIRVRDGLPLSASTDYEQSTGMQECRKYFKMLSRKLAQLPDRCTLKTGHYNINFISSLGVSYMMLCTDNYPNVLAFSFLDELQKEFITTYNMMKTNTAVRPYCFIEFDNFIQRTKQRYNNPRSLSTKINLSDMQTEIKLRPPYQISMCELGSANGVTSAFSVDCKGAGKISSAHQRLEPATLSGIVGFILSLLCGALNLIRGFHAIESLLQSDGDDFNYIIAFFLGTAACLYQCYLLVYYTGWRNVKSFLTFGLICLCNMYLYELRNLWQLFFHVTVGAFVTLQIWLRQAQGKAPDYDV</sequence>
<evidence type="ECO:0000250" key="1"/>
<evidence type="ECO:0000250" key="2">
    <source>
        <dbReference type="UniProtKB" id="Q642F4"/>
    </source>
</evidence>
<evidence type="ECO:0000250" key="3">
    <source>
        <dbReference type="UniProtKB" id="Q96IW7"/>
    </source>
</evidence>
<evidence type="ECO:0000255" key="4"/>
<evidence type="ECO:0000255" key="5">
    <source>
        <dbReference type="PROSITE-ProRule" id="PRU00231"/>
    </source>
</evidence>
<evidence type="ECO:0000305" key="6"/>
<evidence type="ECO:0000312" key="7">
    <source>
        <dbReference type="EMBL" id="BAE00706.1"/>
    </source>
</evidence>
<organism>
    <name type="scientific">Macaca fascicularis</name>
    <name type="common">Crab-eating macaque</name>
    <name type="synonym">Cynomolgus monkey</name>
    <dbReference type="NCBI Taxonomy" id="9541"/>
    <lineage>
        <taxon>Eukaryota</taxon>
        <taxon>Metazoa</taxon>
        <taxon>Chordata</taxon>
        <taxon>Craniata</taxon>
        <taxon>Vertebrata</taxon>
        <taxon>Euteleostomi</taxon>
        <taxon>Mammalia</taxon>
        <taxon>Eutheria</taxon>
        <taxon>Euarchontoglires</taxon>
        <taxon>Primates</taxon>
        <taxon>Haplorrhini</taxon>
        <taxon>Catarrhini</taxon>
        <taxon>Cercopithecidae</taxon>
        <taxon>Cercopithecinae</taxon>
        <taxon>Macaca</taxon>
    </lineage>
</organism>
<feature type="initiator methionine" description="Removed" evidence="3">
    <location>
        <position position="1"/>
    </location>
</feature>
<feature type="chain" id="PRO_0000253044" description="Vesicle-trafficking protein SEC22a">
    <location>
        <begin position="2"/>
        <end position="307"/>
    </location>
</feature>
<feature type="topological domain" description="Cytoplasmic" evidence="4">
    <location>
        <begin position="2"/>
        <end position="187"/>
    </location>
</feature>
<feature type="transmembrane region" description="Helical" evidence="4">
    <location>
        <begin position="188"/>
        <end position="208"/>
    </location>
</feature>
<feature type="topological domain" description="Lumenal" evidence="4">
    <location>
        <begin position="209"/>
        <end position="226"/>
    </location>
</feature>
<feature type="transmembrane region" description="Helical" evidence="4">
    <location>
        <begin position="227"/>
        <end position="247"/>
    </location>
</feature>
<feature type="topological domain" description="Cytoplasmic" evidence="4">
    <location>
        <begin position="248"/>
        <end position="253"/>
    </location>
</feature>
<feature type="transmembrane region" description="Helical" evidence="4">
    <location>
        <begin position="254"/>
        <end position="271"/>
    </location>
</feature>
<feature type="topological domain" description="Lumenal" evidence="4">
    <location>
        <begin position="272"/>
        <end position="274"/>
    </location>
</feature>
<feature type="transmembrane region" description="Helical" evidence="4">
    <location>
        <begin position="275"/>
        <end position="295"/>
    </location>
</feature>
<feature type="topological domain" description="Cytoplasmic" evidence="4">
    <location>
        <begin position="296"/>
        <end position="307"/>
    </location>
</feature>
<feature type="domain" description="Longin" evidence="5">
    <location>
        <begin position="8"/>
        <end position="119"/>
    </location>
</feature>
<feature type="modified residue" description="N-acetylserine" evidence="3">
    <location>
        <position position="2"/>
    </location>
</feature>
<feature type="modified residue" description="Phosphoserine" evidence="3">
    <location>
        <position position="6"/>
    </location>
</feature>
<feature type="modified residue" description="Phosphoserine" evidence="3">
    <location>
        <position position="8"/>
    </location>
</feature>
<gene>
    <name type="primary">SEC22A</name>
    <name type="ORF">QtsA-13287</name>
</gene>
<keyword id="KW-0007">Acetylation</keyword>
<keyword id="KW-0175">Coiled coil</keyword>
<keyword id="KW-0256">Endoplasmic reticulum</keyword>
<keyword id="KW-0931">ER-Golgi transport</keyword>
<keyword id="KW-0472">Membrane</keyword>
<keyword id="KW-0597">Phosphoprotein</keyword>
<keyword id="KW-0653">Protein transport</keyword>
<keyword id="KW-1185">Reference proteome</keyword>
<keyword id="KW-0812">Transmembrane</keyword>
<keyword id="KW-1133">Transmembrane helix</keyword>
<keyword id="KW-0813">Transport</keyword>
<reference evidence="7" key="1">
    <citation type="journal article" date="2002" name="BMC Genomics">
        <title>Cynomolgus monkey testicular cDNAs for discovery of novel human genes in the human genome sequence.</title>
        <authorList>
            <person name="Osada N."/>
            <person name="Hida M."/>
            <person name="Kusuda J."/>
            <person name="Tanuma R."/>
            <person name="Hirata M."/>
            <person name="Suto Y."/>
            <person name="Hirai M."/>
            <person name="Terao K."/>
            <person name="Sugano S."/>
            <person name="Hashimoto K."/>
        </authorList>
    </citation>
    <scope>NUCLEOTIDE SEQUENCE [LARGE SCALE MRNA]</scope>
    <source>
        <tissue evidence="7">Testis</tissue>
    </source>
</reference>
<dbReference type="EMBL" id="AB168592">
    <property type="protein sequence ID" value="BAE00706.1"/>
    <property type="molecule type" value="mRNA"/>
</dbReference>
<dbReference type="RefSeq" id="NP_001270605.1">
    <property type="nucleotide sequence ID" value="NM_001283676.1"/>
</dbReference>
<dbReference type="RefSeq" id="XP_005548022.1">
    <property type="nucleotide sequence ID" value="XM_005547965.4"/>
</dbReference>
<dbReference type="RefSeq" id="XP_005548024.1">
    <property type="nucleotide sequence ID" value="XM_005547967.2"/>
</dbReference>
<dbReference type="RefSeq" id="XP_015300765.1">
    <property type="nucleotide sequence ID" value="XM_015445279.1"/>
</dbReference>
<dbReference type="RefSeq" id="XP_045241454.1">
    <property type="nucleotide sequence ID" value="XM_045385519.2"/>
</dbReference>
<dbReference type="RefSeq" id="XP_045241455.1">
    <property type="nucleotide sequence ID" value="XM_045385520.2"/>
</dbReference>
<dbReference type="SMR" id="Q4R866"/>
<dbReference type="STRING" id="9541.ENSMFAP00000037668"/>
<dbReference type="Ensembl" id="ENSMFAT00000011937.2">
    <property type="protein sequence ID" value="ENSMFAP00000037686.2"/>
    <property type="gene ID" value="ENSMFAG00000038056.2"/>
</dbReference>
<dbReference type="GeneID" id="101865042"/>
<dbReference type="CTD" id="26984"/>
<dbReference type="VEuPathDB" id="HostDB:ENSMFAG00000038056"/>
<dbReference type="eggNOG" id="KOG0862">
    <property type="taxonomic scope" value="Eukaryota"/>
</dbReference>
<dbReference type="GeneTree" id="ENSGT00940000158470"/>
<dbReference type="OMA" id="NTGMQEC"/>
<dbReference type="Proteomes" id="UP000233100">
    <property type="component" value="Chromosome 2"/>
</dbReference>
<dbReference type="Bgee" id="ENSMFAG00000038056">
    <property type="expression patterns" value="Expressed in pituitary gland and 13 other cell types or tissues"/>
</dbReference>
<dbReference type="GO" id="GO:0005789">
    <property type="term" value="C:endoplasmic reticulum membrane"/>
    <property type="evidence" value="ECO:0007669"/>
    <property type="project" value="UniProtKB-SubCell"/>
</dbReference>
<dbReference type="GO" id="GO:0006888">
    <property type="term" value="P:endoplasmic reticulum to Golgi vesicle-mediated transport"/>
    <property type="evidence" value="ECO:0007669"/>
    <property type="project" value="InterPro"/>
</dbReference>
<dbReference type="GO" id="GO:0015031">
    <property type="term" value="P:protein transport"/>
    <property type="evidence" value="ECO:0007669"/>
    <property type="project" value="UniProtKB-KW"/>
</dbReference>
<dbReference type="CDD" id="cd14824">
    <property type="entry name" value="Longin"/>
    <property type="match status" value="1"/>
</dbReference>
<dbReference type="FunFam" id="3.30.450.50:FF:000010">
    <property type="entry name" value="vesicle-trafficking protein SEC22a isoform X2"/>
    <property type="match status" value="1"/>
</dbReference>
<dbReference type="Gene3D" id="3.30.450.50">
    <property type="entry name" value="Longin domain"/>
    <property type="match status" value="1"/>
</dbReference>
<dbReference type="InterPro" id="IPR011012">
    <property type="entry name" value="Longin-like_dom_sf"/>
</dbReference>
<dbReference type="InterPro" id="IPR010908">
    <property type="entry name" value="Longin_dom"/>
</dbReference>
<dbReference type="InterPro" id="IPR043546">
    <property type="entry name" value="Sec22a/c"/>
</dbReference>
<dbReference type="PANTHER" id="PTHR46258">
    <property type="entry name" value="LONGIN DOMAIN-CONTAINING PROTEIN"/>
    <property type="match status" value="1"/>
</dbReference>
<dbReference type="PANTHER" id="PTHR46258:SF3">
    <property type="entry name" value="VESICLE-TRAFFICKING PROTEIN SEC22A"/>
    <property type="match status" value="1"/>
</dbReference>
<dbReference type="Pfam" id="PF13774">
    <property type="entry name" value="Longin"/>
    <property type="match status" value="1"/>
</dbReference>
<dbReference type="SMART" id="SM01270">
    <property type="entry name" value="Longin"/>
    <property type="match status" value="1"/>
</dbReference>
<dbReference type="SUPFAM" id="SSF64356">
    <property type="entry name" value="SNARE-like"/>
    <property type="match status" value="1"/>
</dbReference>
<dbReference type="PROSITE" id="PS50859">
    <property type="entry name" value="LONGIN"/>
    <property type="match status" value="1"/>
</dbReference>
<comment type="function">
    <text evidence="2">May be involved in vesicle transport between the ER and the Golgi complex.</text>
</comment>
<comment type="subcellular location">
    <subcellularLocation>
        <location evidence="1">Endoplasmic reticulum membrane</location>
        <topology evidence="1">Multi-pass membrane protein</topology>
    </subcellularLocation>
</comment>
<comment type="similarity">
    <text evidence="6">Belongs to the synaptobrevin family.</text>
</comment>